<name>UTS2_PIG</name>
<gene>
    <name type="primary">UTS2</name>
</gene>
<reference key="1">
    <citation type="journal article" date="1999" name="Biochem. Biophys. Res. Commun.">
        <title>Urotensin II is the endogenous ligand of a G-protein-coupled orphan receptor, SENR (GPR14).</title>
        <authorList>
            <person name="Mori M."/>
            <person name="Sugo T."/>
            <person name="Abe M."/>
            <person name="Shimomura Y."/>
            <person name="Kurihara M."/>
            <person name="Kitada C."/>
            <person name="Kikuchi K."/>
            <person name="Shintani Y."/>
            <person name="Kurokawa T."/>
            <person name="Onda H."/>
            <person name="Nishimura O."/>
            <person name="Fujino M."/>
        </authorList>
    </citation>
    <scope>NUCLEOTIDE SEQUENCE [MRNA] (ISOFORMS 1 AND 2)</scope>
    <source>
        <tissue>Spinal cord</tissue>
    </source>
</reference>
<protein>
    <recommendedName>
        <fullName>Urotensin-2</fullName>
    </recommendedName>
    <alternativeName>
        <fullName>Urotensin II</fullName>
        <shortName>U-II</shortName>
        <shortName>UII</shortName>
    </alternativeName>
</protein>
<keyword id="KW-0025">Alternative splicing</keyword>
<keyword id="KW-0165">Cleavage on pair of basic residues</keyword>
<keyword id="KW-1015">Disulfide bond</keyword>
<keyword id="KW-0372">Hormone</keyword>
<keyword id="KW-1185">Reference proteome</keyword>
<keyword id="KW-0964">Secreted</keyword>
<keyword id="KW-0732">Signal</keyword>
<accession>Q95J46</accession>
<accession>Q95K72</accession>
<organism>
    <name type="scientific">Sus scrofa</name>
    <name type="common">Pig</name>
    <dbReference type="NCBI Taxonomy" id="9823"/>
    <lineage>
        <taxon>Eukaryota</taxon>
        <taxon>Metazoa</taxon>
        <taxon>Chordata</taxon>
        <taxon>Craniata</taxon>
        <taxon>Vertebrata</taxon>
        <taxon>Euteleostomi</taxon>
        <taxon>Mammalia</taxon>
        <taxon>Eutheria</taxon>
        <taxon>Laurasiatheria</taxon>
        <taxon>Artiodactyla</taxon>
        <taxon>Suina</taxon>
        <taxon>Suidae</taxon>
        <taxon>Sus</taxon>
    </lineage>
</organism>
<feature type="signal peptide" evidence="2">
    <location>
        <begin position="1"/>
        <end position="19"/>
    </location>
</feature>
<feature type="propeptide" id="PRO_0000036353" evidence="2">
    <location>
        <begin position="20"/>
        <end position="106"/>
    </location>
</feature>
<feature type="peptide" id="PRO_0000036354" description="Urotensin-2">
    <location>
        <begin position="110"/>
        <end position="121"/>
    </location>
</feature>
<feature type="disulfide bond" evidence="1">
    <location>
        <begin position="115"/>
        <end position="120"/>
    </location>
</feature>
<feature type="splice variant" id="VSP_012041" description="In isoform 2." evidence="3">
    <location>
        <begin position="34"/>
        <end position="69"/>
    </location>
</feature>
<evidence type="ECO:0000250" key="1"/>
<evidence type="ECO:0000255" key="2"/>
<evidence type="ECO:0000303" key="3">
    <source>
    </source>
</evidence>
<evidence type="ECO:0000305" key="4"/>
<comment type="function">
    <text evidence="1">Highly potent vasoconstrictor.</text>
</comment>
<comment type="subcellular location">
    <subcellularLocation>
        <location>Secreted</location>
    </subcellularLocation>
</comment>
<comment type="alternative products">
    <event type="alternative splicing"/>
    <isoform>
        <id>Q95J46-1</id>
        <name>1</name>
        <sequence type="displayed"/>
    </isoform>
    <isoform>
        <id>Q95J46-2</id>
        <name>2</name>
        <sequence type="described" ref="VSP_012041"/>
    </isoform>
</comment>
<comment type="similarity">
    <text evidence="4">Belongs to the urotensin-2 family.</text>
</comment>
<sequence>MSKLVPCLLLLGCLGLLFALPVPDSRKEPLPFSAPEDVRSAWDELERASLLQMLPETPGAEAGEDLREADAGMDIFYPRGEMRKAFSGQDPNIFLSHLLARIKKPYKKRGPPSECFWKYCV</sequence>
<dbReference type="EMBL" id="AB063244">
    <property type="protein sequence ID" value="BAB60887.1"/>
    <property type="molecule type" value="mRNA"/>
</dbReference>
<dbReference type="EMBL" id="AB063245">
    <property type="protein sequence ID" value="BAB60888.1"/>
    <property type="molecule type" value="mRNA"/>
</dbReference>
<dbReference type="EMBL" id="AB063246">
    <property type="protein sequence ID" value="BAB60889.1"/>
    <property type="molecule type" value="mRNA"/>
</dbReference>
<dbReference type="RefSeq" id="NP_999308.1">
    <molecule id="Q95J46-1"/>
    <property type="nucleotide sequence ID" value="NM_214143.1"/>
</dbReference>
<dbReference type="FunCoup" id="Q95J46">
    <property type="interactions" value="99"/>
</dbReference>
<dbReference type="STRING" id="9823.ENSSSCP00000052473"/>
<dbReference type="PaxDb" id="9823-ENSSSCP00000019973"/>
<dbReference type="Ensembl" id="ENSSSCT00035050006.1">
    <molecule id="Q95J46-2"/>
    <property type="protein sequence ID" value="ENSSSCP00035020015.1"/>
    <property type="gene ID" value="ENSSSCG00035037730.1"/>
</dbReference>
<dbReference type="Ensembl" id="ENSSSCT00035050014.1">
    <molecule id="Q95J46-1"/>
    <property type="protein sequence ID" value="ENSSSCP00035020020.1"/>
    <property type="gene ID" value="ENSSSCG00035037730.1"/>
</dbReference>
<dbReference type="Ensembl" id="ENSSSCT00105045385">
    <molecule id="Q95J46-1"/>
    <property type="protein sequence ID" value="ENSSSCP00105031476"/>
    <property type="gene ID" value="ENSSSCG00105023991"/>
</dbReference>
<dbReference type="GeneID" id="397268"/>
<dbReference type="KEGG" id="ssc:397268"/>
<dbReference type="CTD" id="10911"/>
<dbReference type="eggNOG" id="ENOG502SCRX">
    <property type="taxonomic scope" value="Eukaryota"/>
</dbReference>
<dbReference type="InParanoid" id="Q95J46"/>
<dbReference type="OrthoDB" id="8894951at2759"/>
<dbReference type="Proteomes" id="UP000008227">
    <property type="component" value="Unplaced"/>
</dbReference>
<dbReference type="Proteomes" id="UP000314985">
    <property type="component" value="Unplaced"/>
</dbReference>
<dbReference type="Proteomes" id="UP000694570">
    <property type="component" value="Unplaced"/>
</dbReference>
<dbReference type="Proteomes" id="UP000694571">
    <property type="component" value="Unplaced"/>
</dbReference>
<dbReference type="Proteomes" id="UP000694720">
    <property type="component" value="Unplaced"/>
</dbReference>
<dbReference type="Proteomes" id="UP000694722">
    <property type="component" value="Unplaced"/>
</dbReference>
<dbReference type="Proteomes" id="UP000694723">
    <property type="component" value="Unplaced"/>
</dbReference>
<dbReference type="Proteomes" id="UP000694724">
    <property type="component" value="Unplaced"/>
</dbReference>
<dbReference type="Proteomes" id="UP000694725">
    <property type="component" value="Unplaced"/>
</dbReference>
<dbReference type="Proteomes" id="UP000694726">
    <property type="component" value="Unplaced"/>
</dbReference>
<dbReference type="Proteomes" id="UP000694727">
    <property type="component" value="Unplaced"/>
</dbReference>
<dbReference type="Proteomes" id="UP000694728">
    <property type="component" value="Unplaced"/>
</dbReference>
<dbReference type="GO" id="GO:0005615">
    <property type="term" value="C:extracellular space"/>
    <property type="evidence" value="ECO:0000318"/>
    <property type="project" value="GO_Central"/>
</dbReference>
<dbReference type="GO" id="GO:0005179">
    <property type="term" value="F:hormone activity"/>
    <property type="evidence" value="ECO:0007669"/>
    <property type="project" value="UniProtKB-KW"/>
</dbReference>
<dbReference type="GO" id="GO:0097746">
    <property type="term" value="P:blood vessel diameter maintenance"/>
    <property type="evidence" value="ECO:0007669"/>
    <property type="project" value="InterPro"/>
</dbReference>
<dbReference type="GO" id="GO:0008217">
    <property type="term" value="P:regulation of blood pressure"/>
    <property type="evidence" value="ECO:0000318"/>
    <property type="project" value="GO_Central"/>
</dbReference>
<dbReference type="InterPro" id="IPR001483">
    <property type="entry name" value="Urotensin_II"/>
</dbReference>
<dbReference type="PANTHER" id="PTHR14447">
    <property type="entry name" value="UROTENSIN 2"/>
    <property type="match status" value="1"/>
</dbReference>
<dbReference type="PANTHER" id="PTHR14447:SF0">
    <property type="entry name" value="UROTENSIN-2"/>
    <property type="match status" value="1"/>
</dbReference>
<dbReference type="Pfam" id="PF02083">
    <property type="entry name" value="Urotensin_II"/>
    <property type="match status" value="1"/>
</dbReference>
<dbReference type="PROSITE" id="PS00984">
    <property type="entry name" value="UROTENSIN_II"/>
    <property type="match status" value="1"/>
</dbReference>
<proteinExistence type="evidence at transcript level"/>